<organism>
    <name type="scientific">Candida albicans (strain SC5314 / ATCC MYA-2876)</name>
    <name type="common">Yeast</name>
    <dbReference type="NCBI Taxonomy" id="237561"/>
    <lineage>
        <taxon>Eukaryota</taxon>
        <taxon>Fungi</taxon>
        <taxon>Dikarya</taxon>
        <taxon>Ascomycota</taxon>
        <taxon>Saccharomycotina</taxon>
        <taxon>Pichiomycetes</taxon>
        <taxon>Debaryomycetaceae</taxon>
        <taxon>Candida/Lodderomyces clade</taxon>
        <taxon>Candida</taxon>
    </lineage>
</organism>
<proteinExistence type="evidence at protein level"/>
<dbReference type="EC" id="1.15.1.1"/>
<dbReference type="EMBL" id="CP017624">
    <property type="protein sequence ID" value="AOW27119.1"/>
    <property type="molecule type" value="Genomic_DNA"/>
</dbReference>
<dbReference type="RefSeq" id="XP_719509.1">
    <property type="nucleotide sequence ID" value="XM_714416.1"/>
</dbReference>
<dbReference type="SMR" id="Q5AD05"/>
<dbReference type="STRING" id="237561.Q5AD05"/>
<dbReference type="GlyCosmos" id="Q5AD05">
    <property type="glycosylation" value="9 sites, No reported glycans"/>
</dbReference>
<dbReference type="EnsemblFungi" id="C2_00660C_A-T">
    <property type="protein sequence ID" value="C2_00660C_A-T-p1"/>
    <property type="gene ID" value="C2_00660C_A"/>
</dbReference>
<dbReference type="GeneID" id="3638888"/>
<dbReference type="KEGG" id="cal:CAALFM_C200660CA"/>
<dbReference type="CGD" id="CAL0000184565">
    <property type="gene designation" value="SOD4"/>
</dbReference>
<dbReference type="VEuPathDB" id="FungiDB:C2_00660C_A"/>
<dbReference type="eggNOG" id="ENOG502S5NX">
    <property type="taxonomic scope" value="Eukaryota"/>
</dbReference>
<dbReference type="HOGENOM" id="CLU_063073_1_1_1"/>
<dbReference type="InParanoid" id="Q5AD05"/>
<dbReference type="OMA" id="FTYHIHV"/>
<dbReference type="OrthoDB" id="159229at2759"/>
<dbReference type="PRO" id="PR:Q5AD05"/>
<dbReference type="Proteomes" id="UP000000559">
    <property type="component" value="Chromosome 2"/>
</dbReference>
<dbReference type="GO" id="GO:0009986">
    <property type="term" value="C:cell surface"/>
    <property type="evidence" value="ECO:0000314"/>
    <property type="project" value="CGD"/>
</dbReference>
<dbReference type="GO" id="GO:0005576">
    <property type="term" value="C:extracellular region"/>
    <property type="evidence" value="ECO:0000314"/>
    <property type="project" value="CGD"/>
</dbReference>
<dbReference type="GO" id="GO:0009277">
    <property type="term" value="C:fungal-type cell wall"/>
    <property type="evidence" value="ECO:0000314"/>
    <property type="project" value="CGD"/>
</dbReference>
<dbReference type="GO" id="GO:0030446">
    <property type="term" value="C:hyphal cell wall"/>
    <property type="evidence" value="ECO:0000314"/>
    <property type="project" value="CGD"/>
</dbReference>
<dbReference type="GO" id="GO:0098552">
    <property type="term" value="C:side of membrane"/>
    <property type="evidence" value="ECO:0007669"/>
    <property type="project" value="UniProtKB-KW"/>
</dbReference>
<dbReference type="GO" id="GO:0030445">
    <property type="term" value="C:yeast-form cell wall"/>
    <property type="evidence" value="ECO:0000314"/>
    <property type="project" value="CGD"/>
</dbReference>
<dbReference type="GO" id="GO:0005507">
    <property type="term" value="F:copper ion binding"/>
    <property type="evidence" value="ECO:0000314"/>
    <property type="project" value="CGD"/>
</dbReference>
<dbReference type="GO" id="GO:0004784">
    <property type="term" value="F:superoxide dismutase activity"/>
    <property type="evidence" value="ECO:0000314"/>
    <property type="project" value="CGD"/>
</dbReference>
<dbReference type="GO" id="GO:0071451">
    <property type="term" value="P:cellular response to superoxide"/>
    <property type="evidence" value="ECO:0000314"/>
    <property type="project" value="CGD"/>
</dbReference>
<dbReference type="GO" id="GO:0019430">
    <property type="term" value="P:removal of superoxide radicals"/>
    <property type="evidence" value="ECO:0000318"/>
    <property type="project" value="GO_Central"/>
</dbReference>
<dbReference type="FunFam" id="2.60.40.200:FF:000007">
    <property type="entry name" value="Cell surface Cu-only superoxide dismutase 5"/>
    <property type="match status" value="1"/>
</dbReference>
<dbReference type="Gene3D" id="2.60.40.200">
    <property type="entry name" value="Superoxide dismutase, copper/zinc binding domain"/>
    <property type="match status" value="1"/>
</dbReference>
<dbReference type="InterPro" id="IPR036423">
    <property type="entry name" value="SOD-like_Cu/Zn_dom_sf"/>
</dbReference>
<dbReference type="InterPro" id="IPR024134">
    <property type="entry name" value="SOD_Cu/Zn_/chaperone"/>
</dbReference>
<dbReference type="InterPro" id="IPR001424">
    <property type="entry name" value="SOD_Cu_Zn_dom"/>
</dbReference>
<dbReference type="PANTHER" id="PTHR10003">
    <property type="entry name" value="SUPEROXIDE DISMUTASE CU-ZN -RELATED"/>
    <property type="match status" value="1"/>
</dbReference>
<dbReference type="Pfam" id="PF00080">
    <property type="entry name" value="Sod_Cu"/>
    <property type="match status" value="1"/>
</dbReference>
<dbReference type="SUPFAM" id="SSF49329">
    <property type="entry name" value="Cu,Zn superoxide dismutase-like"/>
    <property type="match status" value="1"/>
</dbReference>
<reference key="1">
    <citation type="journal article" date="2004" name="Proc. Natl. Acad. Sci. U.S.A.">
        <title>The diploid genome sequence of Candida albicans.</title>
        <authorList>
            <person name="Jones T."/>
            <person name="Federspiel N.A."/>
            <person name="Chibana H."/>
            <person name="Dungan J."/>
            <person name="Kalman S."/>
            <person name="Magee B.B."/>
            <person name="Newport G."/>
            <person name="Thorstenson Y.R."/>
            <person name="Agabian N."/>
            <person name="Magee P.T."/>
            <person name="Davis R.W."/>
            <person name="Scherer S."/>
        </authorList>
    </citation>
    <scope>NUCLEOTIDE SEQUENCE [LARGE SCALE GENOMIC DNA]</scope>
    <source>
        <strain>SC5314 / ATCC MYA-2876</strain>
    </source>
</reference>
<reference key="2">
    <citation type="journal article" date="2007" name="Genome Biol.">
        <title>Assembly of the Candida albicans genome into sixteen supercontigs aligned on the eight chromosomes.</title>
        <authorList>
            <person name="van het Hoog M."/>
            <person name="Rast T.J."/>
            <person name="Martchenko M."/>
            <person name="Grindle S."/>
            <person name="Dignard D."/>
            <person name="Hogues H."/>
            <person name="Cuomo C."/>
            <person name="Berriman M."/>
            <person name="Scherer S."/>
            <person name="Magee B.B."/>
            <person name="Whiteway M."/>
            <person name="Chibana H."/>
            <person name="Nantel A."/>
            <person name="Magee P.T."/>
        </authorList>
    </citation>
    <scope>GENOME REANNOTATION</scope>
    <source>
        <strain>SC5314 / ATCC MYA-2876</strain>
    </source>
</reference>
<reference key="3">
    <citation type="journal article" date="2013" name="Genome Biol.">
        <title>Assembly of a phased diploid Candida albicans genome facilitates allele-specific measurements and provides a simple model for repeat and indel structure.</title>
        <authorList>
            <person name="Muzzey D."/>
            <person name="Schwartz K."/>
            <person name="Weissman J.S."/>
            <person name="Sherlock G."/>
        </authorList>
    </citation>
    <scope>NUCLEOTIDE SEQUENCE [LARGE SCALE GENOMIC DNA]</scope>
    <scope>GENOME REANNOTATION</scope>
    <source>
        <strain>SC5314 / ATCC MYA-2876</strain>
    </source>
</reference>
<reference key="4">
    <citation type="journal article" date="2003" name="Yeast">
        <title>Genome-wide identification of fungal GPI proteins.</title>
        <authorList>
            <person name="De Groot P.W."/>
            <person name="Hellingwerf K.J."/>
            <person name="Klis F.M."/>
        </authorList>
    </citation>
    <scope>PREDICTION OF GPI-ANCHOR</scope>
</reference>
<reference key="5">
    <citation type="journal article" date="2004" name="Eukaryot. Cell">
        <title>Proteomic analysis of Candida albicans cell walls reveals covalently bound carbohydrate-active enzymes and adhesins.</title>
        <authorList>
            <person name="de Groot P.W."/>
            <person name="de Boer A.D."/>
            <person name="Cunningham J."/>
            <person name="Dekker H.L."/>
            <person name="de Jong L."/>
            <person name="Hellingwerf K.J."/>
            <person name="de Koster C."/>
            <person name="Klis F.M."/>
        </authorList>
    </citation>
    <scope>IDENTIFICATION BY MASS SPECTROMETRY</scope>
    <scope>SUBCELLULAR LOCATION</scope>
</reference>
<reference key="6">
    <citation type="journal article" date="2004" name="Mol. Biol. Cell">
        <title>Superoxide dismutases in Candida albicans: transcriptional regulation and functional characterization of the hyphal-induced SOD5 gene.</title>
        <authorList>
            <person name="Martchenko M."/>
            <person name="Alarco A.M."/>
            <person name="Harcus D."/>
            <person name="Whiteway M."/>
        </authorList>
    </citation>
    <scope>IDENTIFICATION</scope>
</reference>
<reference key="7">
    <citation type="journal article" date="2005" name="Eukaryot. Cell">
        <title>Candida albicans-conditioned medium protects yeast cells from oxidative stress: a possible link between quorum sensing and oxidative stress resistance.</title>
        <authorList>
            <person name="Westwater C."/>
            <person name="Balish E."/>
            <person name="Schofield D.A."/>
        </authorList>
    </citation>
    <scope>INDUCTION</scope>
</reference>
<reference key="8">
    <citation type="journal article" date="2005" name="J. Antimicrob. Chemother.">
        <title>Oxygen accessibility and iron levels are critical factors for the antifungal action of ciclopirox against Candida albicans.</title>
        <authorList>
            <person name="Sigle H.C."/>
            <person name="Thewes S."/>
            <person name="Niewerth M."/>
            <person name="Korting H.C."/>
            <person name="Schafer-Korting M."/>
            <person name="Hube B."/>
        </authorList>
    </citation>
    <scope>INDUCTION</scope>
</reference>
<reference key="9">
    <citation type="journal article" date="2008" name="Microbiology">
        <title>Hypoxic conditions and iron restriction affect the cell-wall proteome of Candida albicans grown under vagina-simulative conditions.</title>
        <authorList>
            <person name="Sosinska G.J."/>
            <person name="de Groot P.W."/>
            <person name="Teixeira de Mattos M.J."/>
            <person name="Dekker H.L."/>
            <person name="de Koster C.G."/>
            <person name="Hellingwerf K.J."/>
            <person name="Klis F.M."/>
        </authorList>
    </citation>
    <scope>IDENTIFICATION BY MASS SPECTROMETRY</scope>
    <scope>SUBCELLULAR LOCATION</scope>
</reference>
<reference key="10">
    <citation type="journal article" date="2009" name="Mol. Microbiol.">
        <title>Candida albicans cell surface superoxide dismutases degrade host-derived reactive oxygen species to escape innate immune surveillance.</title>
        <authorList>
            <person name="Frohner I.E."/>
            <person name="Bourgeois C."/>
            <person name="Yatsyk K."/>
            <person name="Majer O."/>
            <person name="Kuchler K."/>
        </authorList>
    </citation>
    <scope>FUNCTION</scope>
</reference>
<reference key="11">
    <citation type="journal article" date="2010" name="Mol. Microbiol.">
        <title>Temporal anatomy of an epigenetic switch in cell programming: the white-opaque transition of C. albicans.</title>
        <authorList>
            <person name="Lohse M.B."/>
            <person name="Johnson A.D."/>
        </authorList>
    </citation>
    <scope>INDUCTION</scope>
</reference>
<reference key="12">
    <citation type="journal article" date="2011" name="Antimicrob. Agents Chemother.">
        <title>Superoxide dismutases are involved in Candida albicans biofilm persistence against miconazole.</title>
        <authorList>
            <person name="Bink A."/>
            <person name="Vandenbosch D."/>
            <person name="Coenye T."/>
            <person name="Nelis H."/>
            <person name="Cammue B.P."/>
            <person name="Thevissen K."/>
        </authorList>
    </citation>
    <scope>FUNCTION</scope>
</reference>
<reference key="13">
    <citation type="journal article" date="2011" name="PLoS ONE">
        <title>Farnesol-induced apoptosis in Candida albicans is mediated by Cdr1-p extrusion and depletion of intracellular glutathione.</title>
        <authorList>
            <person name="Zhu J."/>
            <person name="Krom B.P."/>
            <person name="Sanglard D."/>
            <person name="Intapa C."/>
            <person name="Dawson C.C."/>
            <person name="Peters B.M."/>
            <person name="Shirtliff M.E."/>
            <person name="Jabra-Rizk M.A."/>
        </authorList>
    </citation>
    <scope>INDUCTION</scope>
</reference>
<gene>
    <name type="primary">SOD4</name>
    <name type="synonym">PGA2</name>
    <name type="synonym">SOD32</name>
    <name type="ordered locus">CAALFM_C200660CA</name>
    <name type="ORF">CaO19.2062</name>
    <name type="ORF">CaO19.9609</name>
</gene>
<accession>Q5AD05</accession>
<accession>A0A1D8PG54</accession>
<name>SOD4_CANAL</name>
<comment type="function">
    <text evidence="7 9">Superoxide dismutases serve to convert damaging superoxide radicals, a key form of ROS, to less damaging hydrogen peroxide that can be converted into water by catalase action. Degrades host-derived reactive oxygen species to escape innate immune surveillance. Involved in the occurrence of miconazole-tolerant persisters in biofilms. Persisters are cells that survive high doses of an antimicrobial agent.</text>
</comment>
<comment type="catalytic activity">
    <reaction>
        <text>2 superoxide + 2 H(+) = H2O2 + O2</text>
        <dbReference type="Rhea" id="RHEA:20696"/>
        <dbReference type="ChEBI" id="CHEBI:15378"/>
        <dbReference type="ChEBI" id="CHEBI:15379"/>
        <dbReference type="ChEBI" id="CHEBI:16240"/>
        <dbReference type="ChEBI" id="CHEBI:18421"/>
        <dbReference type="EC" id="1.15.1.1"/>
    </reaction>
</comment>
<comment type="cofactor">
    <cofactor evidence="1">
        <name>Cu cation</name>
        <dbReference type="ChEBI" id="CHEBI:23378"/>
    </cofactor>
    <text evidence="1">Binds 1 copper ion per subunit.</text>
</comment>
<comment type="cofactor">
    <cofactor evidence="1">
        <name>Zn(2+)</name>
        <dbReference type="ChEBI" id="CHEBI:29105"/>
    </cofactor>
    <text evidence="1">Binds 1 zinc ion per subunit.</text>
</comment>
<comment type="subcellular location">
    <subcellularLocation>
        <location evidence="4">Secreted</location>
        <location evidence="4">Cell wall</location>
    </subcellularLocation>
    <subcellularLocation>
        <location evidence="12">Membrane</location>
        <topology>Lipid-anchor</topology>
        <topology>GPI-anchor</topology>
    </subcellularLocation>
    <text evidence="4">Covalently-linked GPI-modified cell wall protein (GPI-CWP).</text>
</comment>
<comment type="induction">
    <text evidence="5 6 8 10">Induced by farnesol and ciclopirox. Expression is higher in opaque cells compared to white cells.</text>
</comment>
<comment type="PTM">
    <text>The GPI-anchor is attached to the protein in the endoplasmic reticulum and serves to target the protein to the cell surface. There, the glucosamine-inositol phospholipid moiety is cleaved off and the GPI-modified mannoprotein is covalently attached via its lipidless GPI glycan remnant to the 1,6-beta-glucan of the outer cell wall layer.</text>
</comment>
<comment type="similarity">
    <text evidence="11">Belongs to the Cu-Zn superoxide dismutase family.</text>
</comment>
<evidence type="ECO:0000250" key="1"/>
<evidence type="ECO:0000255" key="2"/>
<evidence type="ECO:0000256" key="3">
    <source>
        <dbReference type="SAM" id="MobiDB-lite"/>
    </source>
</evidence>
<evidence type="ECO:0000269" key="4">
    <source>
    </source>
</evidence>
<evidence type="ECO:0000269" key="5">
    <source>
    </source>
</evidence>
<evidence type="ECO:0000269" key="6">
    <source>
    </source>
</evidence>
<evidence type="ECO:0000269" key="7">
    <source>
    </source>
</evidence>
<evidence type="ECO:0000269" key="8">
    <source>
    </source>
</evidence>
<evidence type="ECO:0000269" key="9">
    <source>
    </source>
</evidence>
<evidence type="ECO:0000269" key="10">
    <source>
    </source>
</evidence>
<evidence type="ECO:0000305" key="11"/>
<evidence type="ECO:0000305" key="12">
    <source>
    </source>
</evidence>
<sequence length="232" mass="23726">MKYLSIISIVALALAGDSPISTDSKGKAPLVARFKKTSKSDIEGTIKFEPANNGTVLVSVDLTGLPSGVGPYPYHVHEKPVPESKNCTATGMHFNPFNGSTTAKTPAALELGDLSGRHGNITSESFEVEYDDSYISLNKDSKAYIGGLSIVVHSNNNTRLNCANITTLDEGDDTASAATWSNSSSSSSSSSKNSTNGSSGSSTSASQGSGAGRAEISGFLAAGIAGVVAALI</sequence>
<feature type="signal peptide" evidence="2">
    <location>
        <begin position="1"/>
        <end position="15"/>
    </location>
</feature>
<feature type="chain" id="PRO_0000424634" description="Cell surface superoxide dismutase [Cu-Zn] 4">
    <location>
        <begin position="16"/>
        <end position="209"/>
    </location>
</feature>
<feature type="propeptide" id="PRO_0000424635" description="Removed in mature form" evidence="2">
    <location>
        <begin position="210"/>
        <end position="232"/>
    </location>
</feature>
<feature type="region of interest" description="Disordered" evidence="3">
    <location>
        <begin position="174"/>
        <end position="211"/>
    </location>
</feature>
<feature type="compositionally biased region" description="Low complexity" evidence="3">
    <location>
        <begin position="174"/>
        <end position="208"/>
    </location>
</feature>
<feature type="binding site" evidence="1">
    <location>
        <position position="75"/>
    </location>
    <ligand>
        <name>Cu cation</name>
        <dbReference type="ChEBI" id="CHEBI:23378"/>
        <note>catalytic</note>
    </ligand>
</feature>
<feature type="binding site" evidence="1">
    <location>
        <position position="77"/>
    </location>
    <ligand>
        <name>Cu cation</name>
        <dbReference type="ChEBI" id="CHEBI:23378"/>
        <note>catalytic</note>
    </ligand>
</feature>
<feature type="binding site" evidence="1">
    <location>
        <position position="93"/>
    </location>
    <ligand>
        <name>Cu cation</name>
        <dbReference type="ChEBI" id="CHEBI:23378"/>
        <note>catalytic</note>
    </ligand>
</feature>
<feature type="binding site" evidence="1">
    <location>
        <position position="93"/>
    </location>
    <ligand>
        <name>Zn(2+)</name>
        <dbReference type="ChEBI" id="CHEBI:29105"/>
        <note>structural</note>
    </ligand>
</feature>
<feature type="binding site" evidence="1">
    <location>
        <position position="113"/>
    </location>
    <ligand>
        <name>Zn(2+)</name>
        <dbReference type="ChEBI" id="CHEBI:29105"/>
        <note>structural</note>
    </ligand>
</feature>
<feature type="binding site" evidence="1">
    <location>
        <position position="153"/>
    </location>
    <ligand>
        <name>Cu cation</name>
        <dbReference type="ChEBI" id="CHEBI:23378"/>
        <note>catalytic</note>
    </ligand>
</feature>
<feature type="binding site" evidence="1">
    <location>
        <position position="213"/>
    </location>
    <ligand>
        <name>substrate</name>
    </ligand>
</feature>
<feature type="lipid moiety-binding region" description="GPI-anchor amidated serine" evidence="2">
    <location>
        <position position="209"/>
    </location>
</feature>
<feature type="glycosylation site" description="N-linked (GlcNAc...) asparagine" evidence="2">
    <location>
        <position position="53"/>
    </location>
</feature>
<feature type="glycosylation site" description="N-linked (GlcNAc...) asparagine" evidence="2">
    <location>
        <position position="86"/>
    </location>
</feature>
<feature type="glycosylation site" description="N-linked (GlcNAc...) asparagine" evidence="2">
    <location>
        <position position="98"/>
    </location>
</feature>
<feature type="glycosylation site" description="N-linked (GlcNAc...) asparagine" evidence="2">
    <location>
        <position position="120"/>
    </location>
</feature>
<feature type="glycosylation site" description="N-linked (GlcNAc...) asparagine" evidence="2">
    <location>
        <position position="156"/>
    </location>
</feature>
<feature type="glycosylation site" description="N-linked (GlcNAc...) asparagine" evidence="2">
    <location>
        <position position="164"/>
    </location>
</feature>
<feature type="glycosylation site" description="N-linked (GlcNAc...) asparagine" evidence="2">
    <location>
        <position position="182"/>
    </location>
</feature>
<feature type="glycosylation site" description="N-linked (GlcNAc...) asparagine" evidence="2">
    <location>
        <position position="193"/>
    </location>
</feature>
<feature type="glycosylation site" description="N-linked (GlcNAc...) asparagine" evidence="2">
    <location>
        <position position="196"/>
    </location>
</feature>
<protein>
    <recommendedName>
        <fullName>Cell surface superoxide dismutase [Cu-Zn] 4</fullName>
        <ecNumber>1.15.1.1</ecNumber>
    </recommendedName>
    <alternativeName>
        <fullName>GPI-anchored protein 2</fullName>
    </alternativeName>
</protein>
<keyword id="KW-0049">Antioxidant</keyword>
<keyword id="KW-0134">Cell wall</keyword>
<keyword id="KW-0186">Copper</keyword>
<keyword id="KW-0325">Glycoprotein</keyword>
<keyword id="KW-0336">GPI-anchor</keyword>
<keyword id="KW-0449">Lipoprotein</keyword>
<keyword id="KW-0472">Membrane</keyword>
<keyword id="KW-0479">Metal-binding</keyword>
<keyword id="KW-0560">Oxidoreductase</keyword>
<keyword id="KW-1185">Reference proteome</keyword>
<keyword id="KW-0964">Secreted</keyword>
<keyword id="KW-0732">Signal</keyword>
<keyword id="KW-0843">Virulence</keyword>
<keyword id="KW-0862">Zinc</keyword>